<sequence>MQDKSIKKIVLAYSGGLDTSAIIPWLKENYGGCEVVAFVADIGQERGDLEGVEQKALQSGASECHVVDLREEFISEYVYPVLQTGALYEGTYLLGTSMARPIIAKAQVELALKVGADALCHGATGKGNDQVRFETTYTALAPQLKVVAPWREWDLRSREALLDYLKERNIPTTASLEKIYSRDENAWHISTEGGVLESPWNAPNKDCWVWTVDPLEAPDQPEQVTIAVEKGRVVAVNGEALSPFGCLDKLNAIGARHGVGRIDIVENRLVGIKSRGCYETPGGTIMVNALRAVEQLVLDRDSFKWREQLGLEMSYVVYDGRWFAPLRKSIQASAEALAEEVNGEVVLQLYKGQVTAIQKKSANSLYSEEFATFGEDEVYDHRHAGGFIRLFSLSSRIRALNEKK</sequence>
<evidence type="ECO:0000255" key="1">
    <source>
        <dbReference type="HAMAP-Rule" id="MF_00005"/>
    </source>
</evidence>
<comment type="catalytic activity">
    <reaction evidence="1">
        <text>L-citrulline + L-aspartate + ATP = 2-(N(omega)-L-arginino)succinate + AMP + diphosphate + H(+)</text>
        <dbReference type="Rhea" id="RHEA:10932"/>
        <dbReference type="ChEBI" id="CHEBI:15378"/>
        <dbReference type="ChEBI" id="CHEBI:29991"/>
        <dbReference type="ChEBI" id="CHEBI:30616"/>
        <dbReference type="ChEBI" id="CHEBI:33019"/>
        <dbReference type="ChEBI" id="CHEBI:57472"/>
        <dbReference type="ChEBI" id="CHEBI:57743"/>
        <dbReference type="ChEBI" id="CHEBI:456215"/>
        <dbReference type="EC" id="6.3.4.5"/>
    </reaction>
</comment>
<comment type="pathway">
    <text evidence="1">Amino-acid biosynthesis; L-arginine biosynthesis; L-arginine from L-ornithine and carbamoyl phosphate: step 2/3.</text>
</comment>
<comment type="subunit">
    <text evidence="1">Homotetramer.</text>
</comment>
<comment type="subcellular location">
    <subcellularLocation>
        <location evidence="1">Cytoplasm</location>
    </subcellularLocation>
</comment>
<comment type="similarity">
    <text evidence="1">Belongs to the argininosuccinate synthase family. Type 1 subfamily.</text>
</comment>
<keyword id="KW-0028">Amino-acid biosynthesis</keyword>
<keyword id="KW-0055">Arginine biosynthesis</keyword>
<keyword id="KW-0067">ATP-binding</keyword>
<keyword id="KW-0963">Cytoplasm</keyword>
<keyword id="KW-0436">Ligase</keyword>
<keyword id="KW-0547">Nucleotide-binding</keyword>
<keyword id="KW-1185">Reference proteome</keyword>
<proteinExistence type="inferred from homology"/>
<organism>
    <name type="scientific">Erwinia tasmaniensis (strain DSM 17950 / CFBP 7177 / CIP 109463 / NCPPB 4357 / Et1/99)</name>
    <dbReference type="NCBI Taxonomy" id="465817"/>
    <lineage>
        <taxon>Bacteria</taxon>
        <taxon>Pseudomonadati</taxon>
        <taxon>Pseudomonadota</taxon>
        <taxon>Gammaproteobacteria</taxon>
        <taxon>Enterobacterales</taxon>
        <taxon>Erwiniaceae</taxon>
        <taxon>Erwinia</taxon>
    </lineage>
</organism>
<feature type="chain" id="PRO_1000089035" description="Argininosuccinate synthase">
    <location>
        <begin position="1"/>
        <end position="404"/>
    </location>
</feature>
<feature type="binding site" evidence="1">
    <location>
        <begin position="12"/>
        <end position="20"/>
    </location>
    <ligand>
        <name>ATP</name>
        <dbReference type="ChEBI" id="CHEBI:30616"/>
    </ligand>
</feature>
<feature type="binding site" evidence="1">
    <location>
        <position position="40"/>
    </location>
    <ligand>
        <name>ATP</name>
        <dbReference type="ChEBI" id="CHEBI:30616"/>
    </ligand>
</feature>
<feature type="binding site" evidence="1">
    <location>
        <position position="92"/>
    </location>
    <ligand>
        <name>L-citrulline</name>
        <dbReference type="ChEBI" id="CHEBI:57743"/>
    </ligand>
</feature>
<feature type="binding site" evidence="1">
    <location>
        <position position="97"/>
    </location>
    <ligand>
        <name>L-citrulline</name>
        <dbReference type="ChEBI" id="CHEBI:57743"/>
    </ligand>
</feature>
<feature type="binding site" evidence="1">
    <location>
        <position position="122"/>
    </location>
    <ligand>
        <name>ATP</name>
        <dbReference type="ChEBI" id="CHEBI:30616"/>
    </ligand>
</feature>
<feature type="binding site" evidence="1">
    <location>
        <position position="124"/>
    </location>
    <ligand>
        <name>L-aspartate</name>
        <dbReference type="ChEBI" id="CHEBI:29991"/>
    </ligand>
</feature>
<feature type="binding site" evidence="1">
    <location>
        <position position="128"/>
    </location>
    <ligand>
        <name>L-aspartate</name>
        <dbReference type="ChEBI" id="CHEBI:29991"/>
    </ligand>
</feature>
<feature type="binding site" evidence="1">
    <location>
        <position position="128"/>
    </location>
    <ligand>
        <name>L-citrulline</name>
        <dbReference type="ChEBI" id="CHEBI:57743"/>
    </ligand>
</feature>
<feature type="binding site" evidence="1">
    <location>
        <position position="129"/>
    </location>
    <ligand>
        <name>L-aspartate</name>
        <dbReference type="ChEBI" id="CHEBI:29991"/>
    </ligand>
</feature>
<feature type="binding site" evidence="1">
    <location>
        <position position="132"/>
    </location>
    <ligand>
        <name>L-citrulline</name>
        <dbReference type="ChEBI" id="CHEBI:57743"/>
    </ligand>
</feature>
<feature type="binding site" evidence="1">
    <location>
        <position position="181"/>
    </location>
    <ligand>
        <name>L-citrulline</name>
        <dbReference type="ChEBI" id="CHEBI:57743"/>
    </ligand>
</feature>
<feature type="binding site" evidence="1">
    <location>
        <position position="190"/>
    </location>
    <ligand>
        <name>L-citrulline</name>
        <dbReference type="ChEBI" id="CHEBI:57743"/>
    </ligand>
</feature>
<feature type="binding site" evidence="1">
    <location>
        <position position="266"/>
    </location>
    <ligand>
        <name>L-citrulline</name>
        <dbReference type="ChEBI" id="CHEBI:57743"/>
    </ligand>
</feature>
<feature type="binding site" evidence="1">
    <location>
        <position position="278"/>
    </location>
    <ligand>
        <name>L-citrulline</name>
        <dbReference type="ChEBI" id="CHEBI:57743"/>
    </ligand>
</feature>
<protein>
    <recommendedName>
        <fullName evidence="1">Argininosuccinate synthase</fullName>
        <ecNumber evidence="1">6.3.4.5</ecNumber>
    </recommendedName>
    <alternativeName>
        <fullName evidence="1">Citrulline--aspartate ligase</fullName>
    </alternativeName>
</protein>
<reference key="1">
    <citation type="journal article" date="2008" name="Environ. Microbiol.">
        <title>The genome of Erwinia tasmaniensis strain Et1/99, a non-pathogenic bacterium in the genus Erwinia.</title>
        <authorList>
            <person name="Kube M."/>
            <person name="Migdoll A.M."/>
            <person name="Mueller I."/>
            <person name="Kuhl H."/>
            <person name="Beck A."/>
            <person name="Reinhardt R."/>
            <person name="Geider K."/>
        </authorList>
    </citation>
    <scope>NUCLEOTIDE SEQUENCE [LARGE SCALE GENOMIC DNA]</scope>
    <source>
        <strain>DSM 17950 / CFBP 7177 / CIP 109463 / NCPPB 4357 / Et1/99</strain>
    </source>
</reference>
<accession>B2VGA8</accession>
<dbReference type="EC" id="6.3.4.5" evidence="1"/>
<dbReference type="EMBL" id="CU468135">
    <property type="protein sequence ID" value="CAO95182.1"/>
    <property type="molecule type" value="Genomic_DNA"/>
</dbReference>
<dbReference type="RefSeq" id="WP_012439906.1">
    <property type="nucleotide sequence ID" value="NC_010694.1"/>
</dbReference>
<dbReference type="SMR" id="B2VGA8"/>
<dbReference type="STRING" id="465817.ETA_01360"/>
<dbReference type="KEGG" id="eta:ETA_01360"/>
<dbReference type="eggNOG" id="COG0137">
    <property type="taxonomic scope" value="Bacteria"/>
</dbReference>
<dbReference type="HOGENOM" id="CLU_032784_4_2_6"/>
<dbReference type="OrthoDB" id="9801641at2"/>
<dbReference type="UniPathway" id="UPA00068">
    <property type="reaction ID" value="UER00113"/>
</dbReference>
<dbReference type="Proteomes" id="UP000001726">
    <property type="component" value="Chromosome"/>
</dbReference>
<dbReference type="GO" id="GO:0005737">
    <property type="term" value="C:cytoplasm"/>
    <property type="evidence" value="ECO:0007669"/>
    <property type="project" value="UniProtKB-SubCell"/>
</dbReference>
<dbReference type="GO" id="GO:0004055">
    <property type="term" value="F:argininosuccinate synthase activity"/>
    <property type="evidence" value="ECO:0007669"/>
    <property type="project" value="UniProtKB-UniRule"/>
</dbReference>
<dbReference type="GO" id="GO:0005524">
    <property type="term" value="F:ATP binding"/>
    <property type="evidence" value="ECO:0007669"/>
    <property type="project" value="UniProtKB-UniRule"/>
</dbReference>
<dbReference type="GO" id="GO:0000053">
    <property type="term" value="P:argininosuccinate metabolic process"/>
    <property type="evidence" value="ECO:0007669"/>
    <property type="project" value="TreeGrafter"/>
</dbReference>
<dbReference type="GO" id="GO:0006526">
    <property type="term" value="P:L-arginine biosynthetic process"/>
    <property type="evidence" value="ECO:0007669"/>
    <property type="project" value="UniProtKB-UniRule"/>
</dbReference>
<dbReference type="GO" id="GO:0000050">
    <property type="term" value="P:urea cycle"/>
    <property type="evidence" value="ECO:0007669"/>
    <property type="project" value="TreeGrafter"/>
</dbReference>
<dbReference type="CDD" id="cd01999">
    <property type="entry name" value="ASS"/>
    <property type="match status" value="1"/>
</dbReference>
<dbReference type="FunFam" id="3.40.50.620:FF:000019">
    <property type="entry name" value="Argininosuccinate synthase"/>
    <property type="match status" value="1"/>
</dbReference>
<dbReference type="FunFam" id="3.90.1260.10:FF:000007">
    <property type="entry name" value="Argininosuccinate synthase"/>
    <property type="match status" value="1"/>
</dbReference>
<dbReference type="Gene3D" id="3.90.1260.10">
    <property type="entry name" value="Argininosuccinate synthetase, chain A, domain 2"/>
    <property type="match status" value="1"/>
</dbReference>
<dbReference type="Gene3D" id="3.40.50.620">
    <property type="entry name" value="HUPs"/>
    <property type="match status" value="1"/>
</dbReference>
<dbReference type="Gene3D" id="1.20.5.470">
    <property type="entry name" value="Single helix bin"/>
    <property type="match status" value="1"/>
</dbReference>
<dbReference type="HAMAP" id="MF_00005">
    <property type="entry name" value="Arg_succ_synth_type1"/>
    <property type="match status" value="1"/>
</dbReference>
<dbReference type="InterPro" id="IPR048268">
    <property type="entry name" value="Arginosuc_syn_C"/>
</dbReference>
<dbReference type="InterPro" id="IPR048267">
    <property type="entry name" value="Arginosuc_syn_N"/>
</dbReference>
<dbReference type="InterPro" id="IPR001518">
    <property type="entry name" value="Arginosuc_synth"/>
</dbReference>
<dbReference type="InterPro" id="IPR018223">
    <property type="entry name" value="Arginosuc_synth_CS"/>
</dbReference>
<dbReference type="InterPro" id="IPR023434">
    <property type="entry name" value="Arginosuc_synth_type_1_subfam"/>
</dbReference>
<dbReference type="InterPro" id="IPR024074">
    <property type="entry name" value="AS_cat/multimer_dom_body"/>
</dbReference>
<dbReference type="InterPro" id="IPR014729">
    <property type="entry name" value="Rossmann-like_a/b/a_fold"/>
</dbReference>
<dbReference type="NCBIfam" id="TIGR00032">
    <property type="entry name" value="argG"/>
    <property type="match status" value="1"/>
</dbReference>
<dbReference type="NCBIfam" id="NF001770">
    <property type="entry name" value="PRK00509.1"/>
    <property type="match status" value="1"/>
</dbReference>
<dbReference type="PANTHER" id="PTHR11587">
    <property type="entry name" value="ARGININOSUCCINATE SYNTHASE"/>
    <property type="match status" value="1"/>
</dbReference>
<dbReference type="PANTHER" id="PTHR11587:SF2">
    <property type="entry name" value="ARGININOSUCCINATE SYNTHASE"/>
    <property type="match status" value="1"/>
</dbReference>
<dbReference type="Pfam" id="PF20979">
    <property type="entry name" value="Arginosuc_syn_C"/>
    <property type="match status" value="1"/>
</dbReference>
<dbReference type="Pfam" id="PF00764">
    <property type="entry name" value="Arginosuc_synth"/>
    <property type="match status" value="1"/>
</dbReference>
<dbReference type="SUPFAM" id="SSF52402">
    <property type="entry name" value="Adenine nucleotide alpha hydrolases-like"/>
    <property type="match status" value="1"/>
</dbReference>
<dbReference type="SUPFAM" id="SSF69864">
    <property type="entry name" value="Argininosuccinate synthetase, C-terminal domain"/>
    <property type="match status" value="1"/>
</dbReference>
<dbReference type="PROSITE" id="PS00564">
    <property type="entry name" value="ARGININOSUCCIN_SYN_1"/>
    <property type="match status" value="1"/>
</dbReference>
<dbReference type="PROSITE" id="PS00565">
    <property type="entry name" value="ARGININOSUCCIN_SYN_2"/>
    <property type="match status" value="1"/>
</dbReference>
<name>ASSY_ERWT9</name>
<gene>
    <name evidence="1" type="primary">argG</name>
    <name type="ordered locus">ETA_01360</name>
</gene>